<keyword id="KW-0963">Cytoplasm</keyword>
<keyword id="KW-0408">Iron</keyword>
<keyword id="KW-0411">Iron-sulfur</keyword>
<keyword id="KW-0479">Metal-binding</keyword>
<keyword id="KW-1185">Reference proteome</keyword>
<keyword id="KW-0949">S-adenosyl-L-methionine</keyword>
<keyword id="KW-0808">Transferase</keyword>
<accession>Q6CLC9</accession>
<gene>
    <name type="primary">DPH1</name>
    <name type="ordered locus">KLLA0F03971g</name>
</gene>
<reference key="1">
    <citation type="journal article" date="2004" name="Nature">
        <title>Genome evolution in yeasts.</title>
        <authorList>
            <person name="Dujon B."/>
            <person name="Sherman D."/>
            <person name="Fischer G."/>
            <person name="Durrens P."/>
            <person name="Casaregola S."/>
            <person name="Lafontaine I."/>
            <person name="de Montigny J."/>
            <person name="Marck C."/>
            <person name="Neuveglise C."/>
            <person name="Talla E."/>
            <person name="Goffard N."/>
            <person name="Frangeul L."/>
            <person name="Aigle M."/>
            <person name="Anthouard V."/>
            <person name="Babour A."/>
            <person name="Barbe V."/>
            <person name="Barnay S."/>
            <person name="Blanchin S."/>
            <person name="Beckerich J.-M."/>
            <person name="Beyne E."/>
            <person name="Bleykasten C."/>
            <person name="Boisrame A."/>
            <person name="Boyer J."/>
            <person name="Cattolico L."/>
            <person name="Confanioleri F."/>
            <person name="de Daruvar A."/>
            <person name="Despons L."/>
            <person name="Fabre E."/>
            <person name="Fairhead C."/>
            <person name="Ferry-Dumazet H."/>
            <person name="Groppi A."/>
            <person name="Hantraye F."/>
            <person name="Hennequin C."/>
            <person name="Jauniaux N."/>
            <person name="Joyet P."/>
            <person name="Kachouri R."/>
            <person name="Kerrest A."/>
            <person name="Koszul R."/>
            <person name="Lemaire M."/>
            <person name="Lesur I."/>
            <person name="Ma L."/>
            <person name="Muller H."/>
            <person name="Nicaud J.-M."/>
            <person name="Nikolski M."/>
            <person name="Oztas S."/>
            <person name="Ozier-Kalogeropoulos O."/>
            <person name="Pellenz S."/>
            <person name="Potier S."/>
            <person name="Richard G.-F."/>
            <person name="Straub M.-L."/>
            <person name="Suleau A."/>
            <person name="Swennen D."/>
            <person name="Tekaia F."/>
            <person name="Wesolowski-Louvel M."/>
            <person name="Westhof E."/>
            <person name="Wirth B."/>
            <person name="Zeniou-Meyer M."/>
            <person name="Zivanovic Y."/>
            <person name="Bolotin-Fukuhara M."/>
            <person name="Thierry A."/>
            <person name="Bouchier C."/>
            <person name="Caudron B."/>
            <person name="Scarpelli C."/>
            <person name="Gaillardin C."/>
            <person name="Weissenbach J."/>
            <person name="Wincker P."/>
            <person name="Souciet J.-L."/>
        </authorList>
    </citation>
    <scope>NUCLEOTIDE SEQUENCE [LARGE SCALE GENOMIC DNA]</scope>
    <source>
        <strain>ATCC 8585 / CBS 2359 / DSM 70799 / NBRC 1267 / NRRL Y-1140 / WM37</strain>
    </source>
</reference>
<sequence length="422" mass="48216">MTMGEVEKKPRRRFVGIKKAAEESDPSGSTTELVKKIKPKTNIRHAINQIPPELLNDEELNAAIKLLPSNYNFEIHKTVWNIRKHKAKRVAIQMPEGLLIYSLVISDILEQFCQCEIVVMGDVSYGACCIDDYTARSLDCDFIVHYAHSCLVPIDITTIKVLYIFVTINIDETHLIKTLQKNFPRGSRIAAFGTIQFNPTIHSMKDKLLQSEEHMLYIIPPQIKPLSKGEVLGCTSERLNKEQIDAMVYVGDGRFHLESAMIHNPEIPAFRYDPYNRRFTRERYDQKQLVEVRASAIDKARSSKKVGLILGALGRQGNLATVENLETKLKASGRTVVKIILSEIFPQKLAMFDDIDAFVQVACPRLSIDWGYAFNKPLLTPYETNVMLENDRMFNEKYYPMDYYHINGYGRGKVPNHDDVTI</sequence>
<proteinExistence type="inferred from homology"/>
<name>DPH1_KLULA</name>
<organism>
    <name type="scientific">Kluyveromyces lactis (strain ATCC 8585 / CBS 2359 / DSM 70799 / NBRC 1267 / NRRL Y-1140 / WM37)</name>
    <name type="common">Yeast</name>
    <name type="synonym">Candida sphaerica</name>
    <dbReference type="NCBI Taxonomy" id="284590"/>
    <lineage>
        <taxon>Eukaryota</taxon>
        <taxon>Fungi</taxon>
        <taxon>Dikarya</taxon>
        <taxon>Ascomycota</taxon>
        <taxon>Saccharomycotina</taxon>
        <taxon>Saccharomycetes</taxon>
        <taxon>Saccharomycetales</taxon>
        <taxon>Saccharomycetaceae</taxon>
        <taxon>Kluyveromyces</taxon>
    </lineage>
</organism>
<protein>
    <recommendedName>
        <fullName evidence="3">2-(3-amino-3-carboxypropyl)histidine synthase subunit 1</fullName>
        <ecNumber evidence="2">2.5.1.108</ecNumber>
    </recommendedName>
    <alternativeName>
        <fullName>Diphthamide biosynthesis protein 1</fullName>
    </alternativeName>
    <alternativeName>
        <fullName evidence="3">Diphtheria toxin resistance protein 1</fullName>
    </alternativeName>
    <alternativeName>
        <fullName evidence="3">S-adenosyl-L-methionine:L-histidine 3-amino-3-carboxypropyltransferase 1</fullName>
    </alternativeName>
</protein>
<dbReference type="EC" id="2.5.1.108" evidence="2"/>
<dbReference type="EMBL" id="CR382126">
    <property type="protein sequence ID" value="CAG97968.1"/>
    <property type="molecule type" value="Genomic_DNA"/>
</dbReference>
<dbReference type="RefSeq" id="XP_455260.1">
    <property type="nucleotide sequence ID" value="XM_455260.1"/>
</dbReference>
<dbReference type="SMR" id="Q6CLC9"/>
<dbReference type="FunCoup" id="Q6CLC9">
    <property type="interactions" value="664"/>
</dbReference>
<dbReference type="STRING" id="284590.Q6CLC9"/>
<dbReference type="PaxDb" id="284590-Q6CLC9"/>
<dbReference type="KEGG" id="kla:KLLA0_F03971g"/>
<dbReference type="eggNOG" id="KOG2648">
    <property type="taxonomic scope" value="Eukaryota"/>
</dbReference>
<dbReference type="HOGENOM" id="CLU_037146_1_1_1"/>
<dbReference type="InParanoid" id="Q6CLC9"/>
<dbReference type="OMA" id="PGQVLGC"/>
<dbReference type="UniPathway" id="UPA00559"/>
<dbReference type="Proteomes" id="UP000000598">
    <property type="component" value="Chromosome F"/>
</dbReference>
<dbReference type="GO" id="GO:0120513">
    <property type="term" value="C:2-(3-amino-3-carboxypropyl)histidine synthase complex"/>
    <property type="evidence" value="ECO:0000250"/>
    <property type="project" value="UniProtKB"/>
</dbReference>
<dbReference type="GO" id="GO:0005737">
    <property type="term" value="C:cytoplasm"/>
    <property type="evidence" value="ECO:0007669"/>
    <property type="project" value="UniProtKB-SubCell"/>
</dbReference>
<dbReference type="GO" id="GO:0090560">
    <property type="term" value="F:2-(3-amino-3-carboxypropyl)histidine synthase activity"/>
    <property type="evidence" value="ECO:0007669"/>
    <property type="project" value="UniProtKB-EC"/>
</dbReference>
<dbReference type="GO" id="GO:0051539">
    <property type="term" value="F:4 iron, 4 sulfur cluster binding"/>
    <property type="evidence" value="ECO:0000250"/>
    <property type="project" value="UniProtKB"/>
</dbReference>
<dbReference type="GO" id="GO:0046872">
    <property type="term" value="F:metal ion binding"/>
    <property type="evidence" value="ECO:0007669"/>
    <property type="project" value="UniProtKB-KW"/>
</dbReference>
<dbReference type="GO" id="GO:0017183">
    <property type="term" value="P:protein histidyl modification to diphthamide"/>
    <property type="evidence" value="ECO:0000250"/>
    <property type="project" value="UniProtKB"/>
</dbReference>
<dbReference type="FunFam" id="3.40.50.11840:FF:000001">
    <property type="entry name" value="2-(3-amino-3-carboxypropyl)histidine synthase subunit 1"/>
    <property type="match status" value="1"/>
</dbReference>
<dbReference type="FunFam" id="3.40.50.11850:FF:000001">
    <property type="entry name" value="2-(3-amino-3-carboxypropyl)histidine synthase subunit 1"/>
    <property type="match status" value="1"/>
</dbReference>
<dbReference type="FunFam" id="3.40.50.11860:FF:000002">
    <property type="entry name" value="2-(3-amino-3-carboxypropyl)histidine synthase subunit 1"/>
    <property type="match status" value="1"/>
</dbReference>
<dbReference type="Gene3D" id="3.40.50.11840">
    <property type="entry name" value="Diphthamide synthesis DPH1/DPH2 domain 1"/>
    <property type="match status" value="1"/>
</dbReference>
<dbReference type="Gene3D" id="3.40.50.11850">
    <property type="entry name" value="Diphthamide synthesis DPH1/DPH2 domain 2"/>
    <property type="match status" value="1"/>
</dbReference>
<dbReference type="Gene3D" id="3.40.50.11860">
    <property type="entry name" value="Diphthamide synthesis DPH1/DPH2 domain 3"/>
    <property type="match status" value="1"/>
</dbReference>
<dbReference type="InterPro" id="IPR016435">
    <property type="entry name" value="DPH1/DPH2"/>
</dbReference>
<dbReference type="InterPro" id="IPR042263">
    <property type="entry name" value="DPH1/DPH2_1"/>
</dbReference>
<dbReference type="InterPro" id="IPR042264">
    <property type="entry name" value="DPH1/DPH2_2"/>
</dbReference>
<dbReference type="InterPro" id="IPR042265">
    <property type="entry name" value="DPH1/DPH2_3"/>
</dbReference>
<dbReference type="InterPro" id="IPR035435">
    <property type="entry name" value="DPH1/DPH2_euk_archaea"/>
</dbReference>
<dbReference type="NCBIfam" id="TIGR00322">
    <property type="entry name" value="diphth2_R"/>
    <property type="match status" value="1"/>
</dbReference>
<dbReference type="PANTHER" id="PTHR10762:SF1">
    <property type="entry name" value="2-(3-AMINO-3-CARBOXYPROPYL)HISTIDINE SYNTHASE SUBUNIT 1"/>
    <property type="match status" value="1"/>
</dbReference>
<dbReference type="PANTHER" id="PTHR10762">
    <property type="entry name" value="DIPHTHAMIDE BIOSYNTHESIS PROTEIN"/>
    <property type="match status" value="1"/>
</dbReference>
<dbReference type="Pfam" id="PF01866">
    <property type="entry name" value="Diphthamide_syn"/>
    <property type="match status" value="1"/>
</dbReference>
<dbReference type="PIRSF" id="PIRSF004967">
    <property type="entry name" value="DPH1"/>
    <property type="match status" value="1"/>
</dbReference>
<dbReference type="SFLD" id="SFLDG01121">
    <property type="entry name" value="Diphthamide_biosynthesis"/>
    <property type="match status" value="1"/>
</dbReference>
<dbReference type="SFLD" id="SFLDS00032">
    <property type="entry name" value="Radical_SAM_3-amino-3-carboxyp"/>
    <property type="match status" value="1"/>
</dbReference>
<evidence type="ECO:0000250" key="1">
    <source>
        <dbReference type="UniProtKB" id="O58832"/>
    </source>
</evidence>
<evidence type="ECO:0000250" key="2">
    <source>
        <dbReference type="UniProtKB" id="P40487"/>
    </source>
</evidence>
<evidence type="ECO:0000305" key="3"/>
<comment type="function">
    <text evidence="2">Catalyzes the first step of diphthamide biosynthesis, a post-translational modification of histidine which occurs in elongation factor 2. DPH1 and DPH2 transfer a 3-amino-3-carboxypropyl (ACP) group from S-adenosyl-L-methionine (SAM) to a histidine residue, the reaction is assisted by a reduction system comprising DPH3 and a NADH-dependent reductase, predominantly CBR1.</text>
</comment>
<comment type="catalytic activity">
    <reaction evidence="2">
        <text>L-histidyl-[translation elongation factor 2] + S-adenosyl-L-methionine = 2-[(3S)-amino-3-carboxypropyl]-L-histidyl-[translation elongation factor 2] + S-methyl-5'-thioadenosine + H(+)</text>
        <dbReference type="Rhea" id="RHEA:36783"/>
        <dbReference type="Rhea" id="RHEA-COMP:9748"/>
        <dbReference type="Rhea" id="RHEA-COMP:9749"/>
        <dbReference type="ChEBI" id="CHEBI:15378"/>
        <dbReference type="ChEBI" id="CHEBI:17509"/>
        <dbReference type="ChEBI" id="CHEBI:29979"/>
        <dbReference type="ChEBI" id="CHEBI:59789"/>
        <dbReference type="ChEBI" id="CHEBI:73995"/>
        <dbReference type="EC" id="2.5.1.108"/>
    </reaction>
</comment>
<comment type="cofactor">
    <cofactor evidence="2">
        <name>[4Fe-4S] cluster</name>
        <dbReference type="ChEBI" id="CHEBI:49883"/>
    </cofactor>
    <text evidence="2">Binds 1 [4Fe-4S] cluster per subunit. The cluster is coordinated with 3 cysteines and an exchangeable S-adenosyl-L-methionine.</text>
</comment>
<comment type="pathway">
    <text>Protein modification; peptidyl-diphthamide biosynthesis.</text>
</comment>
<comment type="subunit">
    <text evidence="2">Component of the 2-(3-amino-3-carboxypropyl)histidine synthase complex composed of DPH1, DPH2, DPH3 and a NADH-dependent reductase, predominantly CBR1.</text>
</comment>
<comment type="subcellular location">
    <subcellularLocation>
        <location evidence="2">Cytoplasm</location>
    </subcellularLocation>
</comment>
<comment type="similarity">
    <text evidence="3">Belongs to the DPH1/DPH2 family. DPH1 subfamily.</text>
</comment>
<feature type="chain" id="PRO_0000083376" description="2-(3-amino-3-carboxypropyl)histidine synthase subunit 1">
    <location>
        <begin position="1"/>
        <end position="422"/>
    </location>
</feature>
<feature type="binding site" evidence="1">
    <location>
        <position position="128"/>
    </location>
    <ligand>
        <name>[4Fe-4S] cluster</name>
        <dbReference type="ChEBI" id="CHEBI:49883"/>
    </ligand>
</feature>
<feature type="binding site" evidence="1">
    <location>
        <position position="234"/>
    </location>
    <ligand>
        <name>[4Fe-4S] cluster</name>
        <dbReference type="ChEBI" id="CHEBI:49883"/>
    </ligand>
</feature>
<feature type="binding site" evidence="1">
    <location>
        <position position="363"/>
    </location>
    <ligand>
        <name>[4Fe-4S] cluster</name>
        <dbReference type="ChEBI" id="CHEBI:49883"/>
    </ligand>
</feature>